<feature type="chain" id="PRO_1000024308" description="Multidrug resistance protein MdtB">
    <location>
        <begin position="1"/>
        <end position="1040"/>
    </location>
</feature>
<feature type="transmembrane region" description="Helical" evidence="1">
    <location>
        <begin position="16"/>
        <end position="36"/>
    </location>
</feature>
<feature type="transmembrane region" description="Helical" evidence="1">
    <location>
        <begin position="347"/>
        <end position="367"/>
    </location>
</feature>
<feature type="transmembrane region" description="Helical" evidence="1">
    <location>
        <begin position="369"/>
        <end position="389"/>
    </location>
</feature>
<feature type="transmembrane region" description="Helical" evidence="1">
    <location>
        <begin position="396"/>
        <end position="416"/>
    </location>
</feature>
<feature type="transmembrane region" description="Helical" evidence="1">
    <location>
        <begin position="440"/>
        <end position="460"/>
    </location>
</feature>
<feature type="transmembrane region" description="Helical" evidence="1">
    <location>
        <begin position="472"/>
        <end position="492"/>
    </location>
</feature>
<feature type="transmembrane region" description="Helical" evidence="1">
    <location>
        <begin position="537"/>
        <end position="557"/>
    </location>
</feature>
<feature type="transmembrane region" description="Helical" evidence="1">
    <location>
        <begin position="863"/>
        <end position="883"/>
    </location>
</feature>
<feature type="transmembrane region" description="Helical" evidence="1">
    <location>
        <begin position="888"/>
        <end position="908"/>
    </location>
</feature>
<feature type="transmembrane region" description="Helical" evidence="1">
    <location>
        <begin position="911"/>
        <end position="931"/>
    </location>
</feature>
<feature type="transmembrane region" description="Helical" evidence="1">
    <location>
        <begin position="968"/>
        <end position="988"/>
    </location>
</feature>
<feature type="transmembrane region" description="Helical" evidence="1">
    <location>
        <begin position="998"/>
        <end position="1018"/>
    </location>
</feature>
<evidence type="ECO:0000255" key="1">
    <source>
        <dbReference type="HAMAP-Rule" id="MF_01423"/>
    </source>
</evidence>
<sequence length="1040" mass="112155">MQVLPPSSTGGPSRLFIMRPVATTLLMVAILLAGIIGYRALPVSALPEVDYPTIQVVTLYPGASPDVMTSAVTAPLERQFGQMSGLKQMSSQSSGGASVITLQFQLTLPLDVAEQEVQAAINAATNLLPSDLPNPPVYSKVNPADPPIMTLAVTSTAMPMTQVEDMVETRVAQKISQISGVGLVTLSGGQRPAVRVKLNAQAIAALGLTSETVRTAITGANVNSAKGSLDGPSRAVTLSANDQMQSAEEYRQLIIAYQNGAPIRLGDVATVEQGAENSWLGAWANKEQAIVMNVQRQPGANIISTADSIRQMLPQLTESLPKSVKVTVLSDRTTNIRASVDDTQFELMMAIALVVMIIYLFLRNIPATIIPGVAVPLSLIGTFAVMVFLDFSINNLTLMALTIATGFVVDDAIVVIENISRYIEKGEKPLAAALKGAGEIGFTIISLTFSLIAVLIPLLFMGDIVGRLFREFAITLAVAILISAVVSLTLTPMMCARMLSQESLRKQNRFSRASEKMFDRIIAAYGRGLAKVLNHPWLTLSVALSTLLLSVLLWVFIPKGFFPVQDNGIIQGTLQAPQSSSFTNMAQRQRQVADVILQDPAVQSLTSFVGVDGTNPSLNSARLQINLKPLDERDDRVQKVIARLQTAVDKVPGVDLFLQPTQDLTIDTQVSRTQYQFTLQATSLDALSTWVPQLMEKLQQLPQLSDVSSDWQDQGLVAYVNVDRDSASRLGISMADVDNALYNAFGQRLISTIYTQANQYRVVLEHNTEITPGLAALDTIRLTSSDGGVVPLSSIAKVEQRFAPLSINHLDQFPVTTISFNVPDNYSLGDAVQEIMDTEKTLNLPVDITTQFQGSTLAFQSALGSTVWLIVAAVVAMYIVLGILYESFIHPITILSTLPTAGVGALLALMIAGSELDVIAIIGIILLIGIVKKNAIMMIDFALAAEREQGMSPRDAIYQACLLRFRPILMTTLAALLGALPLMLSTGVGAELRRPLGIGMVGGLIVSQVLTLFTTPVIYLLFDRLALWTKSRFARHEEEA</sequence>
<keyword id="KW-0997">Cell inner membrane</keyword>
<keyword id="KW-1003">Cell membrane</keyword>
<keyword id="KW-0472">Membrane</keyword>
<keyword id="KW-1185">Reference proteome</keyword>
<keyword id="KW-0812">Transmembrane</keyword>
<keyword id="KW-1133">Transmembrane helix</keyword>
<keyword id="KW-0813">Transport</keyword>
<name>MDTB_SHISS</name>
<proteinExistence type="inferred from homology"/>
<gene>
    <name evidence="1" type="primary">mdtB</name>
    <name type="ordered locus">SSON_2127</name>
</gene>
<organism>
    <name type="scientific">Shigella sonnei (strain Ss046)</name>
    <dbReference type="NCBI Taxonomy" id="300269"/>
    <lineage>
        <taxon>Bacteria</taxon>
        <taxon>Pseudomonadati</taxon>
        <taxon>Pseudomonadota</taxon>
        <taxon>Gammaproteobacteria</taxon>
        <taxon>Enterobacterales</taxon>
        <taxon>Enterobacteriaceae</taxon>
        <taxon>Shigella</taxon>
    </lineage>
</organism>
<accession>Q3Z0C9</accession>
<reference key="1">
    <citation type="journal article" date="2005" name="Nucleic Acids Res.">
        <title>Genome dynamics and diversity of Shigella species, the etiologic agents of bacillary dysentery.</title>
        <authorList>
            <person name="Yang F."/>
            <person name="Yang J."/>
            <person name="Zhang X."/>
            <person name="Chen L."/>
            <person name="Jiang Y."/>
            <person name="Yan Y."/>
            <person name="Tang X."/>
            <person name="Wang J."/>
            <person name="Xiong Z."/>
            <person name="Dong J."/>
            <person name="Xue Y."/>
            <person name="Zhu Y."/>
            <person name="Xu X."/>
            <person name="Sun L."/>
            <person name="Chen S."/>
            <person name="Nie H."/>
            <person name="Peng J."/>
            <person name="Xu J."/>
            <person name="Wang Y."/>
            <person name="Yuan Z."/>
            <person name="Wen Y."/>
            <person name="Yao Z."/>
            <person name="Shen Y."/>
            <person name="Qiang B."/>
            <person name="Hou Y."/>
            <person name="Yu J."/>
            <person name="Jin Q."/>
        </authorList>
    </citation>
    <scope>NUCLEOTIDE SEQUENCE [LARGE SCALE GENOMIC DNA]</scope>
    <source>
        <strain>Ss046</strain>
    </source>
</reference>
<dbReference type="EMBL" id="CP000038">
    <property type="protein sequence ID" value="AAZ88783.1"/>
    <property type="molecule type" value="Genomic_DNA"/>
</dbReference>
<dbReference type="RefSeq" id="WP_001197890.1">
    <property type="nucleotide sequence ID" value="NC_007384.1"/>
</dbReference>
<dbReference type="SMR" id="Q3Z0C9"/>
<dbReference type="GeneID" id="93775114"/>
<dbReference type="KEGG" id="ssn:SSON_2127"/>
<dbReference type="HOGENOM" id="CLU_002755_1_2_6"/>
<dbReference type="Proteomes" id="UP000002529">
    <property type="component" value="Chromosome"/>
</dbReference>
<dbReference type="GO" id="GO:0005886">
    <property type="term" value="C:plasma membrane"/>
    <property type="evidence" value="ECO:0007669"/>
    <property type="project" value="UniProtKB-SubCell"/>
</dbReference>
<dbReference type="GO" id="GO:0042910">
    <property type="term" value="F:xenobiotic transmembrane transporter activity"/>
    <property type="evidence" value="ECO:0007669"/>
    <property type="project" value="TreeGrafter"/>
</dbReference>
<dbReference type="FunFam" id="1.20.1640.10:FF:000001">
    <property type="entry name" value="Efflux pump membrane transporter"/>
    <property type="match status" value="1"/>
</dbReference>
<dbReference type="FunFam" id="3.30.70.1430:FF:000001">
    <property type="entry name" value="Efflux pump membrane transporter"/>
    <property type="match status" value="1"/>
</dbReference>
<dbReference type="FunFam" id="3.30.2090.10:FF:000003">
    <property type="entry name" value="Multidrug resistance protein MdtB"/>
    <property type="match status" value="1"/>
</dbReference>
<dbReference type="FunFam" id="3.30.2090.10:FF:000006">
    <property type="entry name" value="Multidrug resistance protein MdtB"/>
    <property type="match status" value="1"/>
</dbReference>
<dbReference type="Gene3D" id="3.30.70.1430">
    <property type="entry name" value="Multidrug efflux transporter AcrB pore domain"/>
    <property type="match status" value="2"/>
</dbReference>
<dbReference type="Gene3D" id="3.30.70.1440">
    <property type="entry name" value="Multidrug efflux transporter AcrB pore domain"/>
    <property type="match status" value="1"/>
</dbReference>
<dbReference type="Gene3D" id="3.30.70.1320">
    <property type="entry name" value="Multidrug efflux transporter AcrB pore domain like"/>
    <property type="match status" value="1"/>
</dbReference>
<dbReference type="Gene3D" id="3.30.2090.10">
    <property type="entry name" value="Multidrug efflux transporter AcrB TolC docking domain, DN and DC subdomains"/>
    <property type="match status" value="2"/>
</dbReference>
<dbReference type="Gene3D" id="1.20.1640.10">
    <property type="entry name" value="Multidrug efflux transporter AcrB transmembrane domain"/>
    <property type="match status" value="2"/>
</dbReference>
<dbReference type="HAMAP" id="MF_01423">
    <property type="entry name" value="MdtB"/>
    <property type="match status" value="1"/>
</dbReference>
<dbReference type="InterPro" id="IPR027463">
    <property type="entry name" value="AcrB_DN_DC_subdom"/>
</dbReference>
<dbReference type="InterPro" id="IPR001036">
    <property type="entry name" value="Acrflvin-R"/>
</dbReference>
<dbReference type="InterPro" id="IPR022831">
    <property type="entry name" value="Multidrug-R_MdtB"/>
</dbReference>
<dbReference type="NCBIfam" id="NF007798">
    <property type="entry name" value="PRK10503.1"/>
    <property type="match status" value="1"/>
</dbReference>
<dbReference type="NCBIfam" id="NF033617">
    <property type="entry name" value="RND_permease_2"/>
    <property type="match status" value="1"/>
</dbReference>
<dbReference type="PANTHER" id="PTHR32063">
    <property type="match status" value="1"/>
</dbReference>
<dbReference type="PANTHER" id="PTHR32063:SF21">
    <property type="entry name" value="MULTIDRUG RESISTANCE PROTEIN MDTB"/>
    <property type="match status" value="1"/>
</dbReference>
<dbReference type="Pfam" id="PF00873">
    <property type="entry name" value="ACR_tran"/>
    <property type="match status" value="1"/>
</dbReference>
<dbReference type="PRINTS" id="PR00702">
    <property type="entry name" value="ACRIFLAVINRP"/>
</dbReference>
<dbReference type="SUPFAM" id="SSF82693">
    <property type="entry name" value="Multidrug efflux transporter AcrB pore domain, PN1, PN2, PC1 and PC2 subdomains"/>
    <property type="match status" value="3"/>
</dbReference>
<dbReference type="SUPFAM" id="SSF82714">
    <property type="entry name" value="Multidrug efflux transporter AcrB TolC docking domain, DN and DC subdomains"/>
    <property type="match status" value="2"/>
</dbReference>
<dbReference type="SUPFAM" id="SSF82866">
    <property type="entry name" value="Multidrug efflux transporter AcrB transmembrane domain"/>
    <property type="match status" value="2"/>
</dbReference>
<protein>
    <recommendedName>
        <fullName evidence="1">Multidrug resistance protein MdtB</fullName>
    </recommendedName>
    <alternativeName>
        <fullName evidence="1">Multidrug transporter MdtB</fullName>
    </alternativeName>
</protein>
<comment type="subunit">
    <text evidence="1">Part of a tripartite efflux system composed of MdtA, MdtB and MdtC. MdtB forms a heteromultimer with MdtC.</text>
</comment>
<comment type="subcellular location">
    <subcellularLocation>
        <location evidence="1">Cell inner membrane</location>
        <topology evidence="1">Multi-pass membrane protein</topology>
    </subcellularLocation>
</comment>
<comment type="similarity">
    <text evidence="1">Belongs to the resistance-nodulation-cell division (RND) (TC 2.A.6) family. MdtB subfamily.</text>
</comment>